<keyword id="KW-0963">Cytoplasm</keyword>
<keyword id="KW-0489">Methyltransferase</keyword>
<keyword id="KW-0545">Nucleotide biosynthesis</keyword>
<keyword id="KW-0808">Transferase</keyword>
<name>TYSY_CHESB</name>
<organism>
    <name type="scientific">Chelativorans sp. (strain BNC1)</name>
    <dbReference type="NCBI Taxonomy" id="266779"/>
    <lineage>
        <taxon>Bacteria</taxon>
        <taxon>Pseudomonadati</taxon>
        <taxon>Pseudomonadota</taxon>
        <taxon>Alphaproteobacteria</taxon>
        <taxon>Hyphomicrobiales</taxon>
        <taxon>Phyllobacteriaceae</taxon>
        <taxon>Chelativorans</taxon>
    </lineage>
</organism>
<protein>
    <recommendedName>
        <fullName evidence="1">Thymidylate synthase</fullName>
        <shortName evidence="1">TS</shortName>
        <shortName evidence="1">TSase</shortName>
        <ecNumber evidence="1">2.1.1.45</ecNumber>
    </recommendedName>
</protein>
<feature type="chain" id="PRO_1000000624" description="Thymidylate synthase">
    <location>
        <begin position="1"/>
        <end position="264"/>
    </location>
</feature>
<feature type="active site" description="Nucleophile" evidence="1">
    <location>
        <position position="146"/>
    </location>
</feature>
<feature type="binding site" description="in other chain" evidence="1">
    <location>
        <position position="21"/>
    </location>
    <ligand>
        <name>dUMP</name>
        <dbReference type="ChEBI" id="CHEBI:246422"/>
        <note>ligand shared between dimeric partners</note>
    </ligand>
</feature>
<feature type="binding site" evidence="1">
    <location>
        <position position="51"/>
    </location>
    <ligand>
        <name>(6R)-5,10-methylene-5,6,7,8-tetrahydrofolate</name>
        <dbReference type="ChEBI" id="CHEBI:15636"/>
    </ligand>
</feature>
<feature type="binding site" evidence="1">
    <location>
        <begin position="126"/>
        <end position="127"/>
    </location>
    <ligand>
        <name>dUMP</name>
        <dbReference type="ChEBI" id="CHEBI:246422"/>
        <note>ligand shared between dimeric partners</note>
    </ligand>
</feature>
<feature type="binding site" description="in other chain" evidence="1">
    <location>
        <begin position="166"/>
        <end position="169"/>
    </location>
    <ligand>
        <name>dUMP</name>
        <dbReference type="ChEBI" id="CHEBI:246422"/>
        <note>ligand shared between dimeric partners</note>
    </ligand>
</feature>
<feature type="binding site" evidence="1">
    <location>
        <position position="169"/>
    </location>
    <ligand>
        <name>(6R)-5,10-methylene-5,6,7,8-tetrahydrofolate</name>
        <dbReference type="ChEBI" id="CHEBI:15636"/>
    </ligand>
</feature>
<feature type="binding site" description="in other chain" evidence="1">
    <location>
        <position position="177"/>
    </location>
    <ligand>
        <name>dUMP</name>
        <dbReference type="ChEBI" id="CHEBI:246422"/>
        <note>ligand shared between dimeric partners</note>
    </ligand>
</feature>
<feature type="binding site" description="in other chain" evidence="1">
    <location>
        <begin position="207"/>
        <end position="209"/>
    </location>
    <ligand>
        <name>dUMP</name>
        <dbReference type="ChEBI" id="CHEBI:246422"/>
        <note>ligand shared between dimeric partners</note>
    </ligand>
</feature>
<feature type="binding site" evidence="1">
    <location>
        <position position="263"/>
    </location>
    <ligand>
        <name>(6R)-5,10-methylene-5,6,7,8-tetrahydrofolate</name>
        <dbReference type="ChEBI" id="CHEBI:15636"/>
    </ligand>
</feature>
<accession>Q11HI0</accession>
<reference key="1">
    <citation type="submission" date="2006-06" db="EMBL/GenBank/DDBJ databases">
        <title>Complete sequence of chromosome of Mesorhizobium sp. BNC1.</title>
        <authorList>
            <consortium name="US DOE Joint Genome Institute"/>
            <person name="Copeland A."/>
            <person name="Lucas S."/>
            <person name="Lapidus A."/>
            <person name="Barry K."/>
            <person name="Detter J.C."/>
            <person name="Glavina del Rio T."/>
            <person name="Hammon N."/>
            <person name="Israni S."/>
            <person name="Dalin E."/>
            <person name="Tice H."/>
            <person name="Pitluck S."/>
            <person name="Chertkov O."/>
            <person name="Brettin T."/>
            <person name="Bruce D."/>
            <person name="Han C."/>
            <person name="Tapia R."/>
            <person name="Gilna P."/>
            <person name="Schmutz J."/>
            <person name="Larimer F."/>
            <person name="Land M."/>
            <person name="Hauser L."/>
            <person name="Kyrpides N."/>
            <person name="Mikhailova N."/>
            <person name="Richardson P."/>
        </authorList>
    </citation>
    <scope>NUCLEOTIDE SEQUENCE [LARGE SCALE GENOMIC DNA]</scope>
    <source>
        <strain>BNC1</strain>
    </source>
</reference>
<gene>
    <name evidence="1" type="primary">thyA</name>
    <name type="ordered locus">Meso_1751</name>
</gene>
<dbReference type="EC" id="2.1.1.45" evidence="1"/>
<dbReference type="EMBL" id="CP000390">
    <property type="protein sequence ID" value="ABG63145.1"/>
    <property type="molecule type" value="Genomic_DNA"/>
</dbReference>
<dbReference type="SMR" id="Q11HI0"/>
<dbReference type="STRING" id="266779.Meso_1751"/>
<dbReference type="KEGG" id="mes:Meso_1751"/>
<dbReference type="eggNOG" id="COG0207">
    <property type="taxonomic scope" value="Bacteria"/>
</dbReference>
<dbReference type="HOGENOM" id="CLU_021669_0_0_5"/>
<dbReference type="OrthoDB" id="9774633at2"/>
<dbReference type="UniPathway" id="UPA00575"/>
<dbReference type="GO" id="GO:0005829">
    <property type="term" value="C:cytosol"/>
    <property type="evidence" value="ECO:0007669"/>
    <property type="project" value="TreeGrafter"/>
</dbReference>
<dbReference type="GO" id="GO:0004799">
    <property type="term" value="F:thymidylate synthase activity"/>
    <property type="evidence" value="ECO:0007669"/>
    <property type="project" value="UniProtKB-UniRule"/>
</dbReference>
<dbReference type="GO" id="GO:0006231">
    <property type="term" value="P:dTMP biosynthetic process"/>
    <property type="evidence" value="ECO:0007669"/>
    <property type="project" value="UniProtKB-UniRule"/>
</dbReference>
<dbReference type="GO" id="GO:0006235">
    <property type="term" value="P:dTTP biosynthetic process"/>
    <property type="evidence" value="ECO:0007669"/>
    <property type="project" value="UniProtKB-UniRule"/>
</dbReference>
<dbReference type="GO" id="GO:0032259">
    <property type="term" value="P:methylation"/>
    <property type="evidence" value="ECO:0007669"/>
    <property type="project" value="UniProtKB-KW"/>
</dbReference>
<dbReference type="CDD" id="cd00351">
    <property type="entry name" value="TS_Pyrimidine_HMase"/>
    <property type="match status" value="1"/>
</dbReference>
<dbReference type="FunFam" id="3.30.572.10:FF:000001">
    <property type="entry name" value="Thymidylate synthase"/>
    <property type="match status" value="1"/>
</dbReference>
<dbReference type="Gene3D" id="3.30.572.10">
    <property type="entry name" value="Thymidylate synthase/dCMP hydroxymethylase domain"/>
    <property type="match status" value="1"/>
</dbReference>
<dbReference type="HAMAP" id="MF_00008">
    <property type="entry name" value="Thymidy_synth_bact"/>
    <property type="match status" value="1"/>
</dbReference>
<dbReference type="InterPro" id="IPR045097">
    <property type="entry name" value="Thymidate_synth/dCMP_Mease"/>
</dbReference>
<dbReference type="InterPro" id="IPR023451">
    <property type="entry name" value="Thymidate_synth/dCMP_Mease_dom"/>
</dbReference>
<dbReference type="InterPro" id="IPR036926">
    <property type="entry name" value="Thymidate_synth/dCMP_Mease_sf"/>
</dbReference>
<dbReference type="InterPro" id="IPR000398">
    <property type="entry name" value="Thymidylate_synthase"/>
</dbReference>
<dbReference type="InterPro" id="IPR020940">
    <property type="entry name" value="Thymidylate_synthase_AS"/>
</dbReference>
<dbReference type="NCBIfam" id="NF002497">
    <property type="entry name" value="PRK01827.1-3"/>
    <property type="match status" value="1"/>
</dbReference>
<dbReference type="NCBIfam" id="NF002499">
    <property type="entry name" value="PRK01827.1-5"/>
    <property type="match status" value="1"/>
</dbReference>
<dbReference type="NCBIfam" id="TIGR03284">
    <property type="entry name" value="thym_sym"/>
    <property type="match status" value="2"/>
</dbReference>
<dbReference type="PANTHER" id="PTHR11548:SF9">
    <property type="entry name" value="THYMIDYLATE SYNTHASE"/>
    <property type="match status" value="1"/>
</dbReference>
<dbReference type="PANTHER" id="PTHR11548">
    <property type="entry name" value="THYMIDYLATE SYNTHASE 1"/>
    <property type="match status" value="1"/>
</dbReference>
<dbReference type="Pfam" id="PF00303">
    <property type="entry name" value="Thymidylat_synt"/>
    <property type="match status" value="1"/>
</dbReference>
<dbReference type="PRINTS" id="PR00108">
    <property type="entry name" value="THYMDSNTHASE"/>
</dbReference>
<dbReference type="SUPFAM" id="SSF55831">
    <property type="entry name" value="Thymidylate synthase/dCMP hydroxymethylase"/>
    <property type="match status" value="1"/>
</dbReference>
<dbReference type="PROSITE" id="PS00091">
    <property type="entry name" value="THYMIDYLATE_SYNTHASE"/>
    <property type="match status" value="1"/>
</dbReference>
<comment type="function">
    <text evidence="1">Catalyzes the reductive methylation of 2'-deoxyuridine-5'-monophosphate (dUMP) to 2'-deoxythymidine-5'-monophosphate (dTMP) while utilizing 5,10-methylenetetrahydrofolate (mTHF) as the methyl donor and reductant in the reaction, yielding dihydrofolate (DHF) as a by-product. This enzymatic reaction provides an intracellular de novo source of dTMP, an essential precursor for DNA biosynthesis.</text>
</comment>
<comment type="catalytic activity">
    <reaction evidence="1">
        <text>dUMP + (6R)-5,10-methylene-5,6,7,8-tetrahydrofolate = 7,8-dihydrofolate + dTMP</text>
        <dbReference type="Rhea" id="RHEA:12104"/>
        <dbReference type="ChEBI" id="CHEBI:15636"/>
        <dbReference type="ChEBI" id="CHEBI:57451"/>
        <dbReference type="ChEBI" id="CHEBI:63528"/>
        <dbReference type="ChEBI" id="CHEBI:246422"/>
        <dbReference type="EC" id="2.1.1.45"/>
    </reaction>
</comment>
<comment type="pathway">
    <text evidence="1">Pyrimidine metabolism; dTTP biosynthesis.</text>
</comment>
<comment type="subunit">
    <text evidence="1">Homodimer.</text>
</comment>
<comment type="subcellular location">
    <subcellularLocation>
        <location evidence="1">Cytoplasm</location>
    </subcellularLocation>
</comment>
<comment type="similarity">
    <text evidence="1">Belongs to the thymidylate synthase family. Bacterial-type ThyA subfamily.</text>
</comment>
<proteinExistence type="inferred from homology"/>
<sequence>MRQYLDLLAHVLENGIDREDRTGTGTRGVFGYQMRFDLSDGFPVLTTKKLHLRSIIYELLWFLKGDTNIRYLQENGVTIWDEWADENGDLGPVYGAQWRSWPAPDGRHIDQIANLLNGLRENPYSRRHIVTAWNPAEIDGMALPPCHCLFQFHVAEGRLSCQLYQRSADIFLGVPFNIASYALLTMMIAQVTGLKPGDFVHTLGDAHLYKNHFDQAREQLTRTPKPLPTMWINPEVDDLFAFGYEDFRLEGYVADPTIRAPIAV</sequence>
<evidence type="ECO:0000255" key="1">
    <source>
        <dbReference type="HAMAP-Rule" id="MF_00008"/>
    </source>
</evidence>